<organism>
    <name type="scientific">Caenorhabditis elegans</name>
    <dbReference type="NCBI Taxonomy" id="6239"/>
    <lineage>
        <taxon>Eukaryota</taxon>
        <taxon>Metazoa</taxon>
        <taxon>Ecdysozoa</taxon>
        <taxon>Nematoda</taxon>
        <taxon>Chromadorea</taxon>
        <taxon>Rhabditida</taxon>
        <taxon>Rhabditina</taxon>
        <taxon>Rhabditomorpha</taxon>
        <taxon>Rhabditoidea</taxon>
        <taxon>Rhabditidae</taxon>
        <taxon>Peloderinae</taxon>
        <taxon>Caenorhabditis</taxon>
    </lineage>
</organism>
<name>SPK1_CAEEL</name>
<feature type="chain" id="PRO_0000086672" description="Serine/threonine-protein kinase spk-1">
    <location>
        <begin position="1"/>
        <end position="1003"/>
    </location>
</feature>
<feature type="domain" description="Protein kinase" evidence="1">
    <location>
        <begin position="422"/>
        <end position="904"/>
    </location>
</feature>
<feature type="region of interest" description="Disordered" evidence="3">
    <location>
        <begin position="92"/>
        <end position="112"/>
    </location>
</feature>
<feature type="region of interest" description="Disordered" evidence="3">
    <location>
        <begin position="169"/>
        <end position="309"/>
    </location>
</feature>
<feature type="region of interest" description="Disordered" evidence="3">
    <location>
        <begin position="337"/>
        <end position="408"/>
    </location>
</feature>
<feature type="region of interest" description="Disordered" evidence="3">
    <location>
        <begin position="927"/>
        <end position="1003"/>
    </location>
</feature>
<feature type="compositionally biased region" description="Acidic residues" evidence="3">
    <location>
        <begin position="202"/>
        <end position="211"/>
    </location>
</feature>
<feature type="compositionally biased region" description="Basic and acidic residues" evidence="3">
    <location>
        <begin position="248"/>
        <end position="265"/>
    </location>
</feature>
<feature type="compositionally biased region" description="Low complexity" evidence="3">
    <location>
        <begin position="285"/>
        <end position="300"/>
    </location>
</feature>
<feature type="compositionally biased region" description="Basic and acidic residues" evidence="3">
    <location>
        <begin position="346"/>
        <end position="359"/>
    </location>
</feature>
<feature type="compositionally biased region" description="Basic and acidic residues" evidence="3">
    <location>
        <begin position="936"/>
        <end position="953"/>
    </location>
</feature>
<feature type="compositionally biased region" description="Low complexity" evidence="3">
    <location>
        <begin position="954"/>
        <end position="964"/>
    </location>
</feature>
<feature type="compositionally biased region" description="Polar residues" evidence="3">
    <location>
        <begin position="983"/>
        <end position="992"/>
    </location>
</feature>
<feature type="compositionally biased region" description="Basic and acidic residues" evidence="3">
    <location>
        <begin position="994"/>
        <end position="1003"/>
    </location>
</feature>
<feature type="active site" description="Proton acceptor" evidence="1 2">
    <location>
        <position position="555"/>
    </location>
</feature>
<feature type="binding site" evidence="1">
    <location>
        <begin position="428"/>
        <end position="436"/>
    </location>
    <ligand>
        <name>ATP</name>
        <dbReference type="ChEBI" id="CHEBI:30616"/>
    </ligand>
</feature>
<feature type="binding site" evidence="1">
    <location>
        <position position="451"/>
    </location>
    <ligand>
        <name>ATP</name>
        <dbReference type="ChEBI" id="CHEBI:30616"/>
    </ligand>
</feature>
<feature type="splice variant" id="VSP_012277" description="In isoform b and isoform c." evidence="6">
    <location>
        <begin position="1"/>
        <end position="229"/>
    </location>
</feature>
<feature type="splice variant" id="VSP_012278" description="In isoform b and isoform c." evidence="6">
    <original>IESQEAEESATEDLASCHSNDDKNEKDVLVDEDTSKYDNLPVEMRSAKEGEESEGTID</original>
    <variation>MGGPEKNSTVPLPNKKRKKKTNKKKPTAPNTPTSPQAGEKNANLKNGTVTTNGSNHVE</variation>
    <location>
        <begin position="230"/>
        <end position="287"/>
    </location>
</feature>
<feature type="splice variant" id="VSP_012309" description="In isoform b and isoform c." evidence="6">
    <location>
        <begin position="288"/>
        <end position="346"/>
    </location>
</feature>
<feature type="splice variant" id="VSP_012310" description="In isoform b and isoform c." evidence="6">
    <original>K</original>
    <variation>R</variation>
    <location>
        <position position="347"/>
    </location>
</feature>
<feature type="splice variant" id="VSP_012279" description="In isoform c." evidence="7">
    <original>P</original>
    <variation>PQNGVRMRPPSLLFNGPIPQLLQGSSCVNTPSSPRTVPPPPPSLYPQVGCVCNQTYHLTQ</variation>
    <location>
        <position position="651"/>
    </location>
</feature>
<feature type="splice variant" id="VSP_012280" description="In isoform b." evidence="6">
    <location>
        <begin position="983"/>
        <end position="999"/>
    </location>
</feature>
<dbReference type="EC" id="2.7.11.1"/>
<dbReference type="EMBL" id="AF241656">
    <property type="protein sequence ID" value="AAG36873.1"/>
    <property type="molecule type" value="mRNA"/>
</dbReference>
<dbReference type="EMBL" id="Z19152">
    <property type="protein sequence ID" value="CAA79540.2"/>
    <property type="molecule type" value="Genomic_DNA"/>
</dbReference>
<dbReference type="EMBL" id="Z19152">
    <property type="protein sequence ID" value="CAA79541.1"/>
    <property type="molecule type" value="Genomic_DNA"/>
</dbReference>
<dbReference type="EMBL" id="Z19152">
    <property type="protein sequence ID" value="CAA79542.2"/>
    <property type="molecule type" value="Genomic_DNA"/>
</dbReference>
<dbReference type="PIR" id="E88556">
    <property type="entry name" value="E88556"/>
</dbReference>
<dbReference type="PIR" id="F88556">
    <property type="entry name" value="F88556"/>
</dbReference>
<dbReference type="PIR" id="S28282">
    <property type="entry name" value="S28282"/>
</dbReference>
<dbReference type="RefSeq" id="NP_001021133.1">
    <molecule id="Q03563-2"/>
    <property type="nucleotide sequence ID" value="NM_001025962.3"/>
</dbReference>
<dbReference type="RefSeq" id="NP_001021134.1">
    <molecule id="Q03563-3"/>
    <property type="nucleotide sequence ID" value="NM_001025963.6"/>
</dbReference>
<dbReference type="RefSeq" id="NP_499080.3">
    <molecule id="Q03563-1"/>
    <property type="nucleotide sequence ID" value="NM_066679.4"/>
</dbReference>
<dbReference type="SMR" id="Q03563"/>
<dbReference type="BioGRID" id="41525">
    <property type="interactions" value="47"/>
</dbReference>
<dbReference type="DIP" id="DIP-26907N"/>
<dbReference type="FunCoup" id="Q03563">
    <property type="interactions" value="2099"/>
</dbReference>
<dbReference type="IntAct" id="Q03563">
    <property type="interactions" value="30"/>
</dbReference>
<dbReference type="STRING" id="6239.B0464.5a.2"/>
<dbReference type="PaxDb" id="6239-B0464.5a.1"/>
<dbReference type="PeptideAtlas" id="Q03563"/>
<dbReference type="EnsemblMetazoa" id="B0464.5a.1">
    <molecule id="Q03563-1"/>
    <property type="protein sequence ID" value="B0464.5a.1"/>
    <property type="gene ID" value="WBGene00004980"/>
</dbReference>
<dbReference type="EnsemblMetazoa" id="B0464.5a.2">
    <molecule id="Q03563-1"/>
    <property type="protein sequence ID" value="B0464.5a.2"/>
    <property type="gene ID" value="WBGene00004980"/>
</dbReference>
<dbReference type="EnsemblMetazoa" id="B0464.5b.1">
    <molecule id="Q03563-2"/>
    <property type="protein sequence ID" value="B0464.5b.1"/>
    <property type="gene ID" value="WBGene00004980"/>
</dbReference>
<dbReference type="EnsemblMetazoa" id="B0464.5c.1">
    <molecule id="Q03563-3"/>
    <property type="protein sequence ID" value="B0464.5c.1"/>
    <property type="gene ID" value="WBGene00004980"/>
</dbReference>
<dbReference type="GeneID" id="176328"/>
<dbReference type="KEGG" id="cel:CELE_B0464.5"/>
<dbReference type="UCSC" id="B0464.5b.1">
    <molecule id="Q03563-1"/>
    <property type="organism name" value="c. elegans"/>
</dbReference>
<dbReference type="AGR" id="WB:WBGene00004980"/>
<dbReference type="CTD" id="176328"/>
<dbReference type="WormBase" id="B0464.5a">
    <molecule id="Q03563-1"/>
    <property type="protein sequence ID" value="CE36580"/>
    <property type="gene ID" value="WBGene00004980"/>
    <property type="gene designation" value="spk-1"/>
</dbReference>
<dbReference type="WormBase" id="B0464.5b">
    <molecule id="Q03563-2"/>
    <property type="protein sequence ID" value="CE20457"/>
    <property type="gene ID" value="WBGene00004980"/>
    <property type="gene designation" value="spk-1"/>
</dbReference>
<dbReference type="WormBase" id="B0464.5c">
    <molecule id="Q03563-3"/>
    <property type="protein sequence ID" value="CE36373"/>
    <property type="gene ID" value="WBGene00004980"/>
    <property type="gene designation" value="spk-1"/>
</dbReference>
<dbReference type="eggNOG" id="KOG1290">
    <property type="taxonomic scope" value="Eukaryota"/>
</dbReference>
<dbReference type="GeneTree" id="ENSGT00940000170102"/>
<dbReference type="InParanoid" id="Q03563"/>
<dbReference type="OMA" id="RIPVLNC"/>
<dbReference type="OrthoDB" id="2649at2759"/>
<dbReference type="PhylomeDB" id="Q03563"/>
<dbReference type="SignaLink" id="Q03563"/>
<dbReference type="PRO" id="PR:Q03563"/>
<dbReference type="Proteomes" id="UP000001940">
    <property type="component" value="Chromosome III"/>
</dbReference>
<dbReference type="Bgee" id="WBGene00004980">
    <property type="expression patterns" value="Expressed in germ line (C elegans) and 5 other cell types or tissues"/>
</dbReference>
<dbReference type="ExpressionAtlas" id="Q03563">
    <property type="expression patterns" value="baseline and differential"/>
</dbReference>
<dbReference type="GO" id="GO:0005737">
    <property type="term" value="C:cytoplasm"/>
    <property type="evidence" value="ECO:0000318"/>
    <property type="project" value="GO_Central"/>
</dbReference>
<dbReference type="GO" id="GO:0005634">
    <property type="term" value="C:nucleus"/>
    <property type="evidence" value="ECO:0000318"/>
    <property type="project" value="GO_Central"/>
</dbReference>
<dbReference type="GO" id="GO:0005524">
    <property type="term" value="F:ATP binding"/>
    <property type="evidence" value="ECO:0007669"/>
    <property type="project" value="UniProtKB-KW"/>
</dbReference>
<dbReference type="GO" id="GO:0106310">
    <property type="term" value="F:protein serine kinase activity"/>
    <property type="evidence" value="ECO:0007669"/>
    <property type="project" value="RHEA"/>
</dbReference>
<dbReference type="GO" id="GO:0004674">
    <property type="term" value="F:protein serine/threonine kinase activity"/>
    <property type="evidence" value="ECO:0000314"/>
    <property type="project" value="UniProtKB"/>
</dbReference>
<dbReference type="GO" id="GO:0009792">
    <property type="term" value="P:embryo development ending in birth or egg hatching"/>
    <property type="evidence" value="ECO:0000316"/>
    <property type="project" value="UniProtKB"/>
</dbReference>
<dbReference type="GO" id="GO:0006468">
    <property type="term" value="P:protein phosphorylation"/>
    <property type="evidence" value="ECO:0000314"/>
    <property type="project" value="UniProtKB"/>
</dbReference>
<dbReference type="GO" id="GO:0050684">
    <property type="term" value="P:regulation of mRNA processing"/>
    <property type="evidence" value="ECO:0000318"/>
    <property type="project" value="GO_Central"/>
</dbReference>
<dbReference type="GO" id="GO:0000245">
    <property type="term" value="P:spliceosomal complex assembly"/>
    <property type="evidence" value="ECO:0000318"/>
    <property type="project" value="GO_Central"/>
</dbReference>
<dbReference type="CDD" id="cd14136">
    <property type="entry name" value="STKc_SRPK"/>
    <property type="match status" value="1"/>
</dbReference>
<dbReference type="FunFam" id="1.10.510.10:FF:001065">
    <property type="entry name" value="Serine/threonine-protein kinase spk-1"/>
    <property type="match status" value="1"/>
</dbReference>
<dbReference type="FunFam" id="1.10.510.10:FF:000642">
    <property type="entry name" value="Serine/threonine-protein kinase srpk2"/>
    <property type="match status" value="1"/>
</dbReference>
<dbReference type="FunFam" id="3.30.200.20:FF:000163">
    <property type="entry name" value="SRSF protein kinase 2 isoform X1"/>
    <property type="match status" value="1"/>
</dbReference>
<dbReference type="Gene3D" id="3.30.200.20">
    <property type="entry name" value="Phosphorylase Kinase, domain 1"/>
    <property type="match status" value="1"/>
</dbReference>
<dbReference type="Gene3D" id="1.10.510.10">
    <property type="entry name" value="Transferase(Phosphotransferase) domain 1"/>
    <property type="match status" value="2"/>
</dbReference>
<dbReference type="InterPro" id="IPR011009">
    <property type="entry name" value="Kinase-like_dom_sf"/>
</dbReference>
<dbReference type="InterPro" id="IPR000719">
    <property type="entry name" value="Prot_kinase_dom"/>
</dbReference>
<dbReference type="InterPro" id="IPR017441">
    <property type="entry name" value="Protein_kinase_ATP_BS"/>
</dbReference>
<dbReference type="InterPro" id="IPR008271">
    <property type="entry name" value="Ser/Thr_kinase_AS"/>
</dbReference>
<dbReference type="InterPro" id="IPR051334">
    <property type="entry name" value="SRPK"/>
</dbReference>
<dbReference type="PANTHER" id="PTHR47634">
    <property type="entry name" value="PROTEIN KINASE DOMAIN-CONTAINING PROTEIN-RELATED"/>
    <property type="match status" value="1"/>
</dbReference>
<dbReference type="PANTHER" id="PTHR47634:SF9">
    <property type="entry name" value="PROTEIN KINASE DOMAIN-CONTAINING PROTEIN-RELATED"/>
    <property type="match status" value="1"/>
</dbReference>
<dbReference type="Pfam" id="PF00069">
    <property type="entry name" value="Pkinase"/>
    <property type="match status" value="2"/>
</dbReference>
<dbReference type="SMART" id="SM00220">
    <property type="entry name" value="S_TKc"/>
    <property type="match status" value="1"/>
</dbReference>
<dbReference type="SUPFAM" id="SSF56112">
    <property type="entry name" value="Protein kinase-like (PK-like)"/>
    <property type="match status" value="1"/>
</dbReference>
<dbReference type="PROSITE" id="PS00107">
    <property type="entry name" value="PROTEIN_KINASE_ATP"/>
    <property type="match status" value="1"/>
</dbReference>
<dbReference type="PROSITE" id="PS50011">
    <property type="entry name" value="PROTEIN_KINASE_DOM"/>
    <property type="match status" value="1"/>
</dbReference>
<dbReference type="PROSITE" id="PS00108">
    <property type="entry name" value="PROTEIN_KINASE_ST"/>
    <property type="match status" value="1"/>
</dbReference>
<comment type="function">
    <text evidence="4 5">Required for embryogenesis and germline development in both adult hermaphrodites and males. SR-protein kinase (SRPK) that binds directly to and phosphorylates the RS domain of rsp-3/CeSF2 in vitro.</text>
</comment>
<comment type="catalytic activity">
    <reaction>
        <text>L-seryl-[protein] + ATP = O-phospho-L-seryl-[protein] + ADP + H(+)</text>
        <dbReference type="Rhea" id="RHEA:17989"/>
        <dbReference type="Rhea" id="RHEA-COMP:9863"/>
        <dbReference type="Rhea" id="RHEA-COMP:11604"/>
        <dbReference type="ChEBI" id="CHEBI:15378"/>
        <dbReference type="ChEBI" id="CHEBI:29999"/>
        <dbReference type="ChEBI" id="CHEBI:30616"/>
        <dbReference type="ChEBI" id="CHEBI:83421"/>
        <dbReference type="ChEBI" id="CHEBI:456216"/>
        <dbReference type="EC" id="2.7.11.1"/>
    </reaction>
</comment>
<comment type="catalytic activity">
    <reaction>
        <text>L-threonyl-[protein] + ATP = O-phospho-L-threonyl-[protein] + ADP + H(+)</text>
        <dbReference type="Rhea" id="RHEA:46608"/>
        <dbReference type="Rhea" id="RHEA-COMP:11060"/>
        <dbReference type="Rhea" id="RHEA-COMP:11605"/>
        <dbReference type="ChEBI" id="CHEBI:15378"/>
        <dbReference type="ChEBI" id="CHEBI:30013"/>
        <dbReference type="ChEBI" id="CHEBI:30616"/>
        <dbReference type="ChEBI" id="CHEBI:61977"/>
        <dbReference type="ChEBI" id="CHEBI:456216"/>
        <dbReference type="EC" id="2.7.11.1"/>
    </reaction>
</comment>
<comment type="subunit">
    <text>Interacts with rsp-3.</text>
</comment>
<comment type="alternative products">
    <event type="alternative splicing"/>
    <isoform>
        <id>Q03563-1</id>
        <name>a</name>
        <sequence type="displayed"/>
    </isoform>
    <isoform>
        <id>Q03563-2</id>
        <name>b</name>
        <sequence type="described" ref="VSP_012277 VSP_012278 VSP_012309 VSP_012310 VSP_012280"/>
    </isoform>
    <isoform>
        <id>Q03563-3</id>
        <name>c</name>
        <sequence type="described" ref="VSP_012277 VSP_012278 VSP_012309 VSP_012310 VSP_012279"/>
    </isoform>
</comment>
<comment type="tissue specificity">
    <text evidence="5">Predominantly coexpressed with rsp-3 in adult hermaphrodite germlines.</text>
</comment>
<comment type="similarity">
    <text evidence="1">Belongs to the protein kinase superfamily. Ser/Thr protein kinase family.</text>
</comment>
<sequence>MFVVLFCRWLNGFSQHRERLYKFEDEAVQRRRRFRVHSEESEELNDHESYSETDICTQLLASSADVTCHINVDLVNQNRFYFFVKQRNKKENSTNEEEEISSQEINTSTQNEETEVNLVFASAEDNGGVASNFDISDALMVTSNISEVSKLPETLCEEGETVQQKSVVNENDHSNEDDEQSLQSQDGSRCSDEDMNSCVSASDEEDVESQDDSFHVNDATEESIDSVSSIESQEAEESATEDLASCHSNDDKNEKDVLVDEDTSKYDNLPVEMRSAKEGEESEGTIDSSVSSSTSSSSTGDDGDDSATSYDSEDIEIQMFEYDLGTACASASISIPRPSIIPRNNKKTEVNANEERLDDLSVSPGRSDSPGGGGGGHSDSFQDPMDPGEQLGSDDEEQEDPRDYKRGGYHPVNIGDVFNARYHVIRKLGWGHFSTVWLAWDTQDKRFVAMKIVKSAEHYTEAALDEIKLLLSVRSADPNDIGCHKVVQLLDEFTVTGINGQHVAMVFEVLGCNLLKLIIRSNYRGLHLEQVRKICRQVLEALGYMHEKCGIIHTDIKPENVLITMSREEIKIMAQHAVVARKMNMKMSGSAVSTAPDHLVKMAQENMTKNKKKKMKKKAKKQREKLEAELAGLEGLKMDANGLQEAYNNAPELENFNASQVEDVTMEDTVNENGNRNKVEIRSPDRFDRTTLTPFSDPESKFGDLASPSAEYLSSPMSQLPPGGILPAPPVGPNIGDPYCDIDVKIADLGNACWVNHHYTDDIQTRQYRALEVLIGSGYGPPADIWSTACMAFELATGDYLFEPHQGDNYSRDEDHLAHISELLGAIPPSIYKKGKHWREFFHKNGHLLHIHQLKPWSLYEVLRQKYEWSHEDAQQFESFLRPMLDFDQEKRSTAKIALKHPFLLPFGGRAPKSDCPPELLSKMFPDGLIPEPFDGNEHQEVYRDENDSRSASERSANSRSAGGSDDDDEEEFNMNRPGPSGVITNNETTDISDIERFQLDLQ</sequence>
<keyword id="KW-0025">Alternative splicing</keyword>
<keyword id="KW-0067">ATP-binding</keyword>
<keyword id="KW-0217">Developmental protein</keyword>
<keyword id="KW-0418">Kinase</keyword>
<keyword id="KW-0547">Nucleotide-binding</keyword>
<keyword id="KW-1185">Reference proteome</keyword>
<keyword id="KW-0723">Serine/threonine-protein kinase</keyword>
<keyword id="KW-0808">Transferase</keyword>
<gene>
    <name type="primary">spk-1</name>
    <name type="synonym">rsk-1</name>
    <name type="synonym">srk-1</name>
    <name type="ORF">B0464.5</name>
</gene>
<accession>Q03563</accession>
<accession>Q9XVX9</accession>
<accession>Q9XVY0</accession>
<proteinExistence type="evidence at transcript level"/>
<protein>
    <recommendedName>
        <fullName>Serine/threonine-protein kinase spk-1</fullName>
        <ecNumber>2.7.11.1</ecNumber>
    </recommendedName>
</protein>
<reference key="1">
    <citation type="journal article" date="2000" name="Mech. Dev.">
        <title>SPK-1, a C. elegans SR protein kinase homologue, is essential for embryogenesis and required for germline development.</title>
        <authorList>
            <person name="Kuroyanagi H."/>
            <person name="Kimura T."/>
            <person name="Wada K."/>
            <person name="Hisamoto N."/>
            <person name="Matsumoto K."/>
            <person name="Hagiwara M."/>
        </authorList>
    </citation>
    <scope>NUCLEOTIDE SEQUENCE [MRNA] (ISOFORM B)</scope>
    <scope>FUNCTION</scope>
    <scope>TISSUE SPECIFICITY</scope>
</reference>
<reference key="2">
    <citation type="journal article" date="1994" name="Nature">
        <title>2.2 Mb of contiguous nucleotide sequence from chromosome III of C. elegans.</title>
        <authorList>
            <person name="Wilson R."/>
            <person name="Ainscough R."/>
            <person name="Anderson K."/>
            <person name="Baynes C."/>
            <person name="Berks M."/>
            <person name="Bonfield J."/>
            <person name="Burton J."/>
            <person name="Connell M."/>
            <person name="Copsey T."/>
            <person name="Cooper J."/>
            <person name="Coulson A."/>
            <person name="Craxton M."/>
            <person name="Dear S."/>
            <person name="Du Z."/>
            <person name="Durbin R."/>
            <person name="Favello A."/>
            <person name="Fraser A."/>
            <person name="Fulton L."/>
            <person name="Gardner A."/>
            <person name="Green P."/>
            <person name="Hawkins T."/>
            <person name="Hillier L."/>
            <person name="Jier M."/>
            <person name="Johnston L."/>
            <person name="Jones M."/>
            <person name="Kershaw J."/>
            <person name="Kirsten J."/>
            <person name="Laisster N."/>
            <person name="Latreille P."/>
            <person name="Lightning J."/>
            <person name="Lloyd C."/>
            <person name="Mortimore B."/>
            <person name="O'Callaghan M."/>
            <person name="Parsons J."/>
            <person name="Percy C."/>
            <person name="Rifken L."/>
            <person name="Roopra A."/>
            <person name="Saunders D."/>
            <person name="Shownkeen R."/>
            <person name="Sims M."/>
            <person name="Smaldon N."/>
            <person name="Smith A."/>
            <person name="Smith M."/>
            <person name="Sonnhammer E."/>
            <person name="Staden R."/>
            <person name="Sulston J."/>
            <person name="Thierry-Mieg J."/>
            <person name="Thomas K."/>
            <person name="Vaudin M."/>
            <person name="Vaughan K."/>
            <person name="Waterston R."/>
            <person name="Watson A."/>
            <person name="Weinstock L."/>
            <person name="Wilkinson-Sproat J."/>
            <person name="Wohldman P."/>
        </authorList>
    </citation>
    <scope>NUCLEOTIDE SEQUENCE [LARGE SCALE GENOMIC DNA]</scope>
    <source>
        <strain>Bristol N2</strain>
    </source>
</reference>
<reference key="3">
    <citation type="journal article" date="1998" name="Science">
        <title>Genome sequence of the nematode C. elegans: a platform for investigating biology.</title>
        <authorList>
            <consortium name="The C. elegans sequencing consortium"/>
        </authorList>
    </citation>
    <scope>NUCLEOTIDE SEQUENCE [LARGE SCALE GENOMIC DNA]</scope>
    <scope>ALTERNATIVE SPLICING</scope>
    <source>
        <strain>Bristol N2</strain>
    </source>
</reference>
<reference key="4">
    <citation type="journal article" date="2000" name="EMBO J.">
        <title>Functional characterization of SR and SR-related genes in Caenorhabditis elegans.</title>
        <authorList>
            <person name="Longman D."/>
            <person name="Johnstone I.L."/>
            <person name="Caceres J.F."/>
        </authorList>
    </citation>
    <scope>FUNCTION</scope>
</reference>
<evidence type="ECO:0000255" key="1">
    <source>
        <dbReference type="PROSITE-ProRule" id="PRU00159"/>
    </source>
</evidence>
<evidence type="ECO:0000255" key="2">
    <source>
        <dbReference type="PROSITE-ProRule" id="PRU10027"/>
    </source>
</evidence>
<evidence type="ECO:0000256" key="3">
    <source>
        <dbReference type="SAM" id="MobiDB-lite"/>
    </source>
</evidence>
<evidence type="ECO:0000269" key="4">
    <source>
    </source>
</evidence>
<evidence type="ECO:0000269" key="5">
    <source>
    </source>
</evidence>
<evidence type="ECO:0000303" key="6">
    <source>
    </source>
</evidence>
<evidence type="ECO:0000305" key="7"/>